<reference key="1">
    <citation type="journal article" date="2005" name="Nat. Genet.">
        <title>The complete genome sequence of Francisella tularensis, the causative agent of tularemia.</title>
        <authorList>
            <person name="Larsson P."/>
            <person name="Oyston P.C.F."/>
            <person name="Chain P."/>
            <person name="Chu M.C."/>
            <person name="Duffield M."/>
            <person name="Fuxelius H.-H."/>
            <person name="Garcia E."/>
            <person name="Haelltorp G."/>
            <person name="Johansson D."/>
            <person name="Isherwood K.E."/>
            <person name="Karp P.D."/>
            <person name="Larsson E."/>
            <person name="Liu Y."/>
            <person name="Michell S."/>
            <person name="Prior J."/>
            <person name="Prior R."/>
            <person name="Malfatti S."/>
            <person name="Sjoestedt A."/>
            <person name="Svensson K."/>
            <person name="Thompson N."/>
            <person name="Vergez L."/>
            <person name="Wagg J.K."/>
            <person name="Wren B.W."/>
            <person name="Lindler L.E."/>
            <person name="Andersson S.G.E."/>
            <person name="Forsman M."/>
            <person name="Titball R.W."/>
        </authorList>
    </citation>
    <scope>NUCLEOTIDE SEQUENCE [LARGE SCALE GENOMIC DNA]</scope>
    <source>
        <strain>SCHU S4 / Schu 4</strain>
    </source>
</reference>
<protein>
    <recommendedName>
        <fullName evidence="1">Large ribosomal subunit protein bL12</fullName>
    </recommendedName>
    <alternativeName>
        <fullName evidence="2">50S ribosomal protein L7/L12</fullName>
    </alternativeName>
</protein>
<dbReference type="EMBL" id="AJ749949">
    <property type="protein sequence ID" value="CAG44776.1"/>
    <property type="molecule type" value="Genomic_DNA"/>
</dbReference>
<dbReference type="RefSeq" id="WP_003028681.1">
    <property type="nucleotide sequence ID" value="NC_006570.2"/>
</dbReference>
<dbReference type="RefSeq" id="YP_169209.1">
    <property type="nucleotide sequence ID" value="NC_006570.2"/>
</dbReference>
<dbReference type="SMR" id="Q5NID3"/>
<dbReference type="STRING" id="177416.FTT_0143"/>
<dbReference type="DNASU" id="3192013"/>
<dbReference type="EnsemblBacteria" id="CAG44776">
    <property type="protein sequence ID" value="CAG44776"/>
    <property type="gene ID" value="FTT_0143"/>
</dbReference>
<dbReference type="KEGG" id="ftu:FTT_0143"/>
<dbReference type="eggNOG" id="COG0222">
    <property type="taxonomic scope" value="Bacteria"/>
</dbReference>
<dbReference type="OrthoDB" id="9811748at2"/>
<dbReference type="Proteomes" id="UP000001174">
    <property type="component" value="Chromosome"/>
</dbReference>
<dbReference type="GO" id="GO:0022625">
    <property type="term" value="C:cytosolic large ribosomal subunit"/>
    <property type="evidence" value="ECO:0007669"/>
    <property type="project" value="TreeGrafter"/>
</dbReference>
<dbReference type="GO" id="GO:0003729">
    <property type="term" value="F:mRNA binding"/>
    <property type="evidence" value="ECO:0007669"/>
    <property type="project" value="TreeGrafter"/>
</dbReference>
<dbReference type="GO" id="GO:0003735">
    <property type="term" value="F:structural constituent of ribosome"/>
    <property type="evidence" value="ECO:0007669"/>
    <property type="project" value="InterPro"/>
</dbReference>
<dbReference type="GO" id="GO:0006412">
    <property type="term" value="P:translation"/>
    <property type="evidence" value="ECO:0007669"/>
    <property type="project" value="UniProtKB-UniRule"/>
</dbReference>
<dbReference type="CDD" id="cd00387">
    <property type="entry name" value="Ribosomal_L7_L12"/>
    <property type="match status" value="1"/>
</dbReference>
<dbReference type="FunFam" id="3.30.1390.10:FF:000001">
    <property type="entry name" value="50S ribosomal protein L7/L12"/>
    <property type="match status" value="1"/>
</dbReference>
<dbReference type="Gene3D" id="3.30.1390.10">
    <property type="match status" value="1"/>
</dbReference>
<dbReference type="Gene3D" id="1.20.5.710">
    <property type="entry name" value="Single helix bin"/>
    <property type="match status" value="1"/>
</dbReference>
<dbReference type="HAMAP" id="MF_00368">
    <property type="entry name" value="Ribosomal_bL12"/>
    <property type="match status" value="1"/>
</dbReference>
<dbReference type="InterPro" id="IPR000206">
    <property type="entry name" value="Ribosomal_bL12"/>
</dbReference>
<dbReference type="InterPro" id="IPR013823">
    <property type="entry name" value="Ribosomal_bL12_C"/>
</dbReference>
<dbReference type="InterPro" id="IPR014719">
    <property type="entry name" value="Ribosomal_bL12_C/ClpS-like"/>
</dbReference>
<dbReference type="InterPro" id="IPR008932">
    <property type="entry name" value="Ribosomal_bL12_oligo"/>
</dbReference>
<dbReference type="InterPro" id="IPR036235">
    <property type="entry name" value="Ribosomal_bL12_oligo_N_sf"/>
</dbReference>
<dbReference type="NCBIfam" id="TIGR00855">
    <property type="entry name" value="L12"/>
    <property type="match status" value="1"/>
</dbReference>
<dbReference type="PANTHER" id="PTHR45987">
    <property type="entry name" value="39S RIBOSOMAL PROTEIN L12"/>
    <property type="match status" value="1"/>
</dbReference>
<dbReference type="PANTHER" id="PTHR45987:SF4">
    <property type="entry name" value="LARGE RIBOSOMAL SUBUNIT PROTEIN BL12M"/>
    <property type="match status" value="1"/>
</dbReference>
<dbReference type="Pfam" id="PF00542">
    <property type="entry name" value="Ribosomal_L12"/>
    <property type="match status" value="1"/>
</dbReference>
<dbReference type="Pfam" id="PF16320">
    <property type="entry name" value="Ribosomal_L12_N"/>
    <property type="match status" value="1"/>
</dbReference>
<dbReference type="SUPFAM" id="SSF54736">
    <property type="entry name" value="ClpS-like"/>
    <property type="match status" value="1"/>
</dbReference>
<dbReference type="SUPFAM" id="SSF48300">
    <property type="entry name" value="Ribosomal protein L7/12, oligomerisation (N-terminal) domain"/>
    <property type="match status" value="1"/>
</dbReference>
<sequence>MAITKEDILNAVAEMSVMDVCDLVKMMEDKFGVSAAAAVAVAAGPVAGPAEAAEEKTEFDVVLVDAGSNKIAAIKAVRGATGLGLKEAKDAVEGTPFTVKEAASKEEAEVLKKQLEEAGAKVELK</sequence>
<comment type="function">
    <text evidence="1">Forms part of the ribosomal stalk which helps the ribosome interact with GTP-bound translation factors. Is thus essential for accurate translation.</text>
</comment>
<comment type="subunit">
    <text evidence="1">Homodimer. Part of the ribosomal stalk of the 50S ribosomal subunit. Forms a multimeric L10(L12)X complex, where L10 forms an elongated spine to which 2 to 4 L12 dimers bind in a sequential fashion. Binds GTP-bound translation factors.</text>
</comment>
<comment type="similarity">
    <text evidence="1">Belongs to the bacterial ribosomal protein bL12 family.</text>
</comment>
<accession>Q5NID3</accession>
<keyword id="KW-1185">Reference proteome</keyword>
<keyword id="KW-0687">Ribonucleoprotein</keyword>
<keyword id="KW-0689">Ribosomal protein</keyword>
<proteinExistence type="inferred from homology"/>
<feature type="chain" id="PRO_0000243424" description="Large ribosomal subunit protein bL12">
    <location>
        <begin position="1"/>
        <end position="125"/>
    </location>
</feature>
<organism>
    <name type="scientific">Francisella tularensis subsp. tularensis (strain SCHU S4 / Schu 4)</name>
    <dbReference type="NCBI Taxonomy" id="177416"/>
    <lineage>
        <taxon>Bacteria</taxon>
        <taxon>Pseudomonadati</taxon>
        <taxon>Pseudomonadota</taxon>
        <taxon>Gammaproteobacteria</taxon>
        <taxon>Thiotrichales</taxon>
        <taxon>Francisellaceae</taxon>
        <taxon>Francisella</taxon>
    </lineage>
</organism>
<gene>
    <name evidence="1" type="primary">rplL</name>
    <name type="ordered locus">FTT_0143</name>
</gene>
<name>RL7_FRATT</name>
<evidence type="ECO:0000255" key="1">
    <source>
        <dbReference type="HAMAP-Rule" id="MF_00368"/>
    </source>
</evidence>
<evidence type="ECO:0000305" key="2"/>